<reference key="1">
    <citation type="journal article" date="2003" name="PLoS Biol.">
        <title>The genome sequence of Caenorhabditis briggsae: a platform for comparative genomics.</title>
        <authorList>
            <person name="Stein L.D."/>
            <person name="Bao Z."/>
            <person name="Blasiar D."/>
            <person name="Blumenthal T."/>
            <person name="Brent M.R."/>
            <person name="Chen N."/>
            <person name="Chinwalla A."/>
            <person name="Clarke L."/>
            <person name="Clee C."/>
            <person name="Coghlan A."/>
            <person name="Coulson A."/>
            <person name="D'Eustachio P."/>
            <person name="Fitch D.H.A."/>
            <person name="Fulton L.A."/>
            <person name="Fulton R.E."/>
            <person name="Griffiths-Jones S."/>
            <person name="Harris T.W."/>
            <person name="Hillier L.W."/>
            <person name="Kamath R."/>
            <person name="Kuwabara P.E."/>
            <person name="Mardis E.R."/>
            <person name="Marra M.A."/>
            <person name="Miner T.L."/>
            <person name="Minx P."/>
            <person name="Mullikin J.C."/>
            <person name="Plumb R.W."/>
            <person name="Rogers J."/>
            <person name="Schein J.E."/>
            <person name="Sohrmann M."/>
            <person name="Spieth J."/>
            <person name="Stajich J.E."/>
            <person name="Wei C."/>
            <person name="Willey D."/>
            <person name="Wilson R.K."/>
            <person name="Durbin R.M."/>
            <person name="Waterston R.H."/>
        </authorList>
    </citation>
    <scope>NUCLEOTIDE SEQUENCE [LARGE SCALE GENOMIC DNA]</scope>
    <source>
        <strain>AF16</strain>
    </source>
</reference>
<comment type="function">
    <text evidence="1 2">Calcium sensor of the mitochondrial calcium uniporter (mcu-1) channel, which senses calcium level via its EF-hand domains (By similarity). At low calcium levels, micu-1 occludes the pore of the mcu-1 channel, preventing mitochondrial calcium uptake. At higher calcium levels, calcium-binding to micu-1 induces a conformational change that weakens mcu-1-micu-1 interactions and moves micu-1 away from the pore, allowing calcium permeation through the mcu-1 channel (By similarity). Also required to protect against manganese toxicity by preventing manganese uptake by mcu-1. Modulates the activity of the mitochondrial calcium uniporter protein mcu-1 depending on the level of intracellular calcium in PLM touch receptor neurons following axonal injury (By similarity).</text>
</comment>
<comment type="subcellular location">
    <subcellularLocation>
        <location evidence="2">Mitochondrion intermembrane space</location>
    </subcellularLocation>
    <subcellularLocation>
        <location evidence="2">Mitochondrion inner membrane</location>
    </subcellularLocation>
</comment>
<comment type="domain">
    <text evidence="2">The EF-hand domains have high affinity for calcium and act as sensors of calcium levels.</text>
</comment>
<comment type="similarity">
    <text evidence="6">Belongs to the MICU1 family. MICU1 subfamily.</text>
</comment>
<feature type="transit peptide" description="Mitochondrion" evidence="3">
    <location>
        <begin position="1"/>
        <end position="13"/>
    </location>
</feature>
<feature type="chain" id="PRO_0000399810" description="Calcium uptake protein 1 homolog, mitochondrial">
    <location>
        <begin position="14"/>
        <end position="533"/>
    </location>
</feature>
<feature type="domain" description="EF-hand 1" evidence="4">
    <location>
        <begin position="270"/>
        <end position="305"/>
    </location>
</feature>
<feature type="domain" description="EF-hand 2" evidence="4">
    <location>
        <begin position="337"/>
        <end position="358"/>
    </location>
</feature>
<feature type="domain" description="EF-hand 3" evidence="4">
    <location>
        <begin position="465"/>
        <end position="500"/>
    </location>
</feature>
<feature type="region of interest" description="Disordered" evidence="5">
    <location>
        <begin position="127"/>
        <end position="147"/>
    </location>
</feature>
<feature type="binding site" evidence="4">
    <location>
        <position position="283"/>
    </location>
    <ligand>
        <name>Ca(2+)</name>
        <dbReference type="ChEBI" id="CHEBI:29108"/>
    </ligand>
</feature>
<feature type="binding site" evidence="4">
    <location>
        <position position="285"/>
    </location>
    <ligand>
        <name>Ca(2+)</name>
        <dbReference type="ChEBI" id="CHEBI:29108"/>
    </ligand>
</feature>
<feature type="binding site" evidence="4">
    <location>
        <position position="287"/>
    </location>
    <ligand>
        <name>Ca(2+)</name>
        <dbReference type="ChEBI" id="CHEBI:29108"/>
    </ligand>
</feature>
<feature type="binding site" evidence="4">
    <location>
        <position position="294"/>
    </location>
    <ligand>
        <name>Ca(2+)</name>
        <dbReference type="ChEBI" id="CHEBI:29108"/>
    </ligand>
</feature>
<keyword id="KW-0106">Calcium</keyword>
<keyword id="KW-0109">Calcium transport</keyword>
<keyword id="KW-0406">Ion transport</keyword>
<keyword id="KW-0472">Membrane</keyword>
<keyword id="KW-0479">Metal-binding</keyword>
<keyword id="KW-0496">Mitochondrion</keyword>
<keyword id="KW-0999">Mitochondrion inner membrane</keyword>
<keyword id="KW-1185">Reference proteome</keyword>
<keyword id="KW-0677">Repeat</keyword>
<keyword id="KW-0809">Transit peptide</keyword>
<keyword id="KW-0813">Transport</keyword>
<organism>
    <name type="scientific">Caenorhabditis briggsae</name>
    <dbReference type="NCBI Taxonomy" id="6238"/>
    <lineage>
        <taxon>Eukaryota</taxon>
        <taxon>Metazoa</taxon>
        <taxon>Ecdysozoa</taxon>
        <taxon>Nematoda</taxon>
        <taxon>Chromadorea</taxon>
        <taxon>Rhabditida</taxon>
        <taxon>Rhabditina</taxon>
        <taxon>Rhabditomorpha</taxon>
        <taxon>Rhabditoidea</taxon>
        <taxon>Rhabditidae</taxon>
        <taxon>Peloderinae</taxon>
        <taxon>Caenorhabditis</taxon>
    </lineage>
</organism>
<proteinExistence type="inferred from homology"/>
<dbReference type="EMBL" id="HE601298">
    <property type="protein sequence ID" value="CAP22842.2"/>
    <property type="molecule type" value="Genomic_DNA"/>
</dbReference>
<dbReference type="SMR" id="A8WQT4"/>
<dbReference type="FunCoup" id="A8WQT4">
    <property type="interactions" value="2387"/>
</dbReference>
<dbReference type="STRING" id="6238.A8WQT4"/>
<dbReference type="WormBase" id="CBG01795">
    <property type="protein sequence ID" value="CBP14257"/>
    <property type="gene ID" value="WBGene00024981"/>
    <property type="gene designation" value="Cbr-micu-1"/>
</dbReference>
<dbReference type="eggNOG" id="KOG2643">
    <property type="taxonomic scope" value="Eukaryota"/>
</dbReference>
<dbReference type="HOGENOM" id="CLU_027103_3_0_1"/>
<dbReference type="InParanoid" id="A8WQT4"/>
<dbReference type="OMA" id="VRTEVWK"/>
<dbReference type="Proteomes" id="UP000008549">
    <property type="component" value="Unassembled WGS sequence"/>
</dbReference>
<dbReference type="GO" id="GO:0005758">
    <property type="term" value="C:mitochondrial intermembrane space"/>
    <property type="evidence" value="ECO:0007669"/>
    <property type="project" value="UniProtKB-SubCell"/>
</dbReference>
<dbReference type="GO" id="GO:1990246">
    <property type="term" value="C:uniplex complex"/>
    <property type="evidence" value="ECO:0000318"/>
    <property type="project" value="GO_Central"/>
</dbReference>
<dbReference type="GO" id="GO:0005509">
    <property type="term" value="F:calcium ion binding"/>
    <property type="evidence" value="ECO:0000318"/>
    <property type="project" value="GO_Central"/>
</dbReference>
<dbReference type="GO" id="GO:0036444">
    <property type="term" value="P:calcium import into the mitochondrion"/>
    <property type="evidence" value="ECO:0000318"/>
    <property type="project" value="GO_Central"/>
</dbReference>
<dbReference type="GO" id="GO:0051560">
    <property type="term" value="P:mitochondrial calcium ion homeostasis"/>
    <property type="evidence" value="ECO:0000318"/>
    <property type="project" value="GO_Central"/>
</dbReference>
<dbReference type="GO" id="GO:0051561">
    <property type="term" value="P:positive regulation of mitochondrial calcium ion concentration"/>
    <property type="evidence" value="ECO:0000250"/>
    <property type="project" value="UniProtKB"/>
</dbReference>
<dbReference type="CDD" id="cd15900">
    <property type="entry name" value="EFh_MICU"/>
    <property type="match status" value="1"/>
</dbReference>
<dbReference type="FunFam" id="1.10.238.10:FF:000535">
    <property type="entry name" value="Calcium uptake protein 1 homolog, mitochondrial"/>
    <property type="match status" value="1"/>
</dbReference>
<dbReference type="FunFam" id="1.10.238.10:FF:000837">
    <property type="entry name" value="Calcium uptake protein 1 homolog, mitochondrial"/>
    <property type="match status" value="1"/>
</dbReference>
<dbReference type="Gene3D" id="1.10.238.10">
    <property type="entry name" value="EF-hand"/>
    <property type="match status" value="2"/>
</dbReference>
<dbReference type="InterPro" id="IPR011992">
    <property type="entry name" value="EF-hand-dom_pair"/>
</dbReference>
<dbReference type="InterPro" id="IPR018247">
    <property type="entry name" value="EF_Hand_1_Ca_BS"/>
</dbReference>
<dbReference type="InterPro" id="IPR002048">
    <property type="entry name" value="EF_hand_dom"/>
</dbReference>
<dbReference type="InterPro" id="IPR039800">
    <property type="entry name" value="MICU1/2/3"/>
</dbReference>
<dbReference type="PANTHER" id="PTHR12294:SF1">
    <property type="entry name" value="CALCIUM UPTAKE PROTEIN 1, MITOCHONDRIAL"/>
    <property type="match status" value="1"/>
</dbReference>
<dbReference type="PANTHER" id="PTHR12294">
    <property type="entry name" value="EF HAND DOMAIN FAMILY A1,A2-RELATED"/>
    <property type="match status" value="1"/>
</dbReference>
<dbReference type="Pfam" id="PF13202">
    <property type="entry name" value="EF-hand_5"/>
    <property type="match status" value="1"/>
</dbReference>
<dbReference type="Pfam" id="PF13833">
    <property type="entry name" value="EF-hand_8"/>
    <property type="match status" value="1"/>
</dbReference>
<dbReference type="SMART" id="SM00054">
    <property type="entry name" value="EFh"/>
    <property type="match status" value="2"/>
</dbReference>
<dbReference type="SUPFAM" id="SSF47473">
    <property type="entry name" value="EF-hand"/>
    <property type="match status" value="2"/>
</dbReference>
<dbReference type="PROSITE" id="PS00018">
    <property type="entry name" value="EF_HAND_1"/>
    <property type="match status" value="1"/>
</dbReference>
<dbReference type="PROSITE" id="PS50222">
    <property type="entry name" value="EF_HAND_2"/>
    <property type="match status" value="3"/>
</dbReference>
<gene>
    <name evidence="7" type="primary">micu-1</name>
    <name evidence="7" type="ORF">CBG01795</name>
</gene>
<name>MICU1_CAEBR</name>
<evidence type="ECO:0000250" key="1">
    <source>
        <dbReference type="UniProtKB" id="Q95PZ2"/>
    </source>
</evidence>
<evidence type="ECO:0000250" key="2">
    <source>
        <dbReference type="UniProtKB" id="Q9BPX6"/>
    </source>
</evidence>
<evidence type="ECO:0000255" key="3"/>
<evidence type="ECO:0000255" key="4">
    <source>
        <dbReference type="PROSITE-ProRule" id="PRU00448"/>
    </source>
</evidence>
<evidence type="ECO:0000256" key="5">
    <source>
        <dbReference type="SAM" id="MobiDB-lite"/>
    </source>
</evidence>
<evidence type="ECO:0000305" key="6"/>
<evidence type="ECO:0000312" key="7">
    <source>
        <dbReference type="WormBase" id="CBG01795"/>
    </source>
</evidence>
<protein>
    <recommendedName>
        <fullName>Calcium uptake protein 1 homolog, mitochondrial</fullName>
    </recommendedName>
</protein>
<sequence length="533" mass="62004">MLRHNFRSSIFIRIVANSWSITRSVSSAPIKAESRKQQDSLKNIDSGEAYTALGNIRQKKDVFHYTDRASGTGYSHYSNSVYQHRPYIWPPLRKMYNWNYAFVIAGMVILMSDFEWIKEQIKGASTPFRPEASQKEESTDSGTEIEVKEKPKKKKLGFRERRIIEYEDRLRLYSTPDKIFRYFATLKIIDPNDESGRIFEVFMTPEDFLRSFTPGVMQPRRWGLDSFKAYNPEKHKRHKFSDPNSIFYKLGENGLINFSDYLFLMTLLSTSHADFALAFKIFDVDGNGALDKEEFTKVQQLIMSQTTVGQRHRDHVTPNSSFRVETNSALETYFFGKDGKGSLSSEKFIEFQERLQHDILKMEFERRDAMENSDGLITEESFAQLLLLHAQIAEKKQKHMLKRVKRRFKGDQSKGVSFDETKAFFEFLYHIDDVDIALHFHKMAGMSIDAKLLKRVAVKVTGIPLSDHVVDVVITLFDDNLDGKLSHEEMVAVMRRRMRRGLERPRDTGLFRLFDAVLECGKRAYHASPLPFY</sequence>
<accession>A8WQT4</accession>